<name>RRF2M_PICST</name>
<comment type="function">
    <text evidence="1">Mitochondrial GTPase that mediates the disassembly of ribosomes from messenger RNA at the termination of mitochondrial protein biosynthesis. Not involved in the GTP-dependent ribosomal translocation step during translation elongation.</text>
</comment>
<comment type="subcellular location">
    <subcellularLocation>
        <location evidence="1">Mitochondrion</location>
    </subcellularLocation>
</comment>
<comment type="similarity">
    <text evidence="1">Belongs to the TRAFAC class translation factor GTPase superfamily. Classic translation factor GTPase family. EF-G/EF-2 subfamily.</text>
</comment>
<reference key="1">
    <citation type="journal article" date="2007" name="Nat. Biotechnol.">
        <title>Genome sequence of the lignocellulose-bioconverting and xylose-fermenting yeast Pichia stipitis.</title>
        <authorList>
            <person name="Jeffries T.W."/>
            <person name="Grigoriev I.V."/>
            <person name="Grimwood J."/>
            <person name="Laplaza J.M."/>
            <person name="Aerts A."/>
            <person name="Salamov A."/>
            <person name="Schmutz J."/>
            <person name="Lindquist E."/>
            <person name="Dehal P."/>
            <person name="Shapiro H."/>
            <person name="Jin Y.-S."/>
            <person name="Passoth V."/>
            <person name="Richardson P.M."/>
        </authorList>
    </citation>
    <scope>NUCLEOTIDE SEQUENCE [LARGE SCALE GENOMIC DNA]</scope>
    <source>
        <strain>ATCC 58785 / CBS 6054 / NBRC 10063 / NRRL Y-11545</strain>
    </source>
</reference>
<protein>
    <recommendedName>
        <fullName evidence="1">Ribosome-releasing factor 2, mitochondrial</fullName>
        <shortName evidence="1">RRF2mt</shortName>
    </recommendedName>
    <alternativeName>
        <fullName evidence="1">Elongation factor G 2, mitochondrial</fullName>
        <shortName evidence="1">EF-G2mt</shortName>
        <shortName evidence="1">mEF-G 2</shortName>
    </alternativeName>
</protein>
<accession>A3LWR2</accession>
<gene>
    <name evidence="1" type="primary">MEF2</name>
    <name type="ORF">PICST_67982</name>
</gene>
<keyword id="KW-0342">GTP-binding</keyword>
<keyword id="KW-0496">Mitochondrion</keyword>
<keyword id="KW-0547">Nucleotide-binding</keyword>
<keyword id="KW-0648">Protein biosynthesis</keyword>
<keyword id="KW-1185">Reference proteome</keyword>
<keyword id="KW-0809">Transit peptide</keyword>
<sequence>MIIATSLRSQTFCTWRAWRAVHSTAVRLESKLNEVPIDRTRNIGIIAHIDAGKTTTTERMLYYSGKTKRIGNVDEGDTVTDYLPSERQRGITIQSAAISIPWNNHKINIIDTPGHADFTFEVTRSLRVLDGAVTILDGVAGVEAQTEKVWKQATSLNIPKIAYVNKMDRPGAGFSRTVMEIIEKLQTRVVLCNVPYFENSKDNDPVFCGVADILHVKLLKWNPEIDPHGKNITVIDIEAERDTYPEVYETVVKSRESMVETLGEFDEAIIDSFLESNEDYMNIPINVLNEAIRKATLENYLTPVYCGSSFRNIGVQPLMDGVVKYLPSPLQISVPEITSSATKNVKIKHVKAKQAVKQDMEVTTKMNNRTGLVVNANPNLTLALAFKVMTHATRGVMTFFRVYSGKLVSNSIITNTTTGKKLHVKKLFMMHGDEPEEVKHISSGNIGVITGHEDDIQTGDTLVSHSHLKKGFSEMESNLKLLPIEIPPPLFNSAIEPQTAGDEAYMKECVRILTREDPSLKVSVDEEMGQTIISGMGELHLDIVKERLVRDMKAKVTLRDVAVSYKETLLNPGSSYKQTSESGSVSIEIEMDSFEGAAEESSFFEENGAMIIAEDNNIIIIEPSAISQNMLKALEERRWKSTYSLEDLQEIVIQGCLTALQMGGPIFGLSLHSTVIRVKSWDFPVADSSVASTVLLDVSRSAVTSYIATNRDWFGILEPIMETRVYIDSDIMGEVSHDLTQRCQAVIKSIEDESTQDVDALAWAKDEAEKTFLPPDYTMKAGKDAISYKNKKIIIAETPLREMIGYLSRLRSITQGRGTFDMTYIGMRRAIKSRFDAISKEFNFM</sequence>
<proteinExistence type="inferred from homology"/>
<feature type="transit peptide" description="Mitochondrion" evidence="1">
    <location>
        <begin position="1"/>
        <end position="28"/>
    </location>
</feature>
<feature type="chain" id="PRO_0000385620" description="Ribosome-releasing factor 2, mitochondrial">
    <location>
        <begin position="29"/>
        <end position="845"/>
    </location>
</feature>
<feature type="domain" description="tr-type G">
    <location>
        <begin position="38"/>
        <end position="330"/>
    </location>
</feature>
<feature type="binding site" evidence="1">
    <location>
        <begin position="47"/>
        <end position="54"/>
    </location>
    <ligand>
        <name>GTP</name>
        <dbReference type="ChEBI" id="CHEBI:37565"/>
    </ligand>
</feature>
<feature type="binding site" evidence="1">
    <location>
        <begin position="111"/>
        <end position="115"/>
    </location>
    <ligand>
        <name>GTP</name>
        <dbReference type="ChEBI" id="CHEBI:37565"/>
    </ligand>
</feature>
<feature type="binding site" evidence="1">
    <location>
        <begin position="165"/>
        <end position="168"/>
    </location>
    <ligand>
        <name>GTP</name>
        <dbReference type="ChEBI" id="CHEBI:37565"/>
    </ligand>
</feature>
<dbReference type="EMBL" id="CP000500">
    <property type="protein sequence ID" value="ABN67321.2"/>
    <property type="molecule type" value="Genomic_DNA"/>
</dbReference>
<dbReference type="RefSeq" id="XP_001385350.2">
    <property type="nucleotide sequence ID" value="XM_001385313.1"/>
</dbReference>
<dbReference type="SMR" id="A3LWR2"/>
<dbReference type="FunCoup" id="A3LWR2">
    <property type="interactions" value="604"/>
</dbReference>
<dbReference type="STRING" id="322104.A3LWR2"/>
<dbReference type="GeneID" id="4839873"/>
<dbReference type="KEGG" id="pic:PICST_67982"/>
<dbReference type="eggNOG" id="KOG0465">
    <property type="taxonomic scope" value="Eukaryota"/>
</dbReference>
<dbReference type="HOGENOM" id="CLU_002794_4_1_1"/>
<dbReference type="InParanoid" id="A3LWR2"/>
<dbReference type="OMA" id="GPQFTFP"/>
<dbReference type="OrthoDB" id="198619at2759"/>
<dbReference type="Proteomes" id="UP000002258">
    <property type="component" value="Chromosome 6"/>
</dbReference>
<dbReference type="GO" id="GO:0005739">
    <property type="term" value="C:mitochondrion"/>
    <property type="evidence" value="ECO:0007669"/>
    <property type="project" value="UniProtKB-SubCell"/>
</dbReference>
<dbReference type="GO" id="GO:0005525">
    <property type="term" value="F:GTP binding"/>
    <property type="evidence" value="ECO:0007669"/>
    <property type="project" value="UniProtKB-UniRule"/>
</dbReference>
<dbReference type="GO" id="GO:0003924">
    <property type="term" value="F:GTPase activity"/>
    <property type="evidence" value="ECO:0007669"/>
    <property type="project" value="UniProtKB-UniRule"/>
</dbReference>
<dbReference type="GO" id="GO:0000002">
    <property type="term" value="P:mitochondrial genome maintenance"/>
    <property type="evidence" value="ECO:0007669"/>
    <property type="project" value="EnsemblFungi"/>
</dbReference>
<dbReference type="GO" id="GO:0032543">
    <property type="term" value="P:mitochondrial translation"/>
    <property type="evidence" value="ECO:0007669"/>
    <property type="project" value="UniProtKB-UniRule"/>
</dbReference>
<dbReference type="GO" id="GO:0051881">
    <property type="term" value="P:regulation of mitochondrial membrane potential"/>
    <property type="evidence" value="ECO:0007669"/>
    <property type="project" value="EnsemblFungi"/>
</dbReference>
<dbReference type="GO" id="GO:0032790">
    <property type="term" value="P:ribosome disassembly"/>
    <property type="evidence" value="ECO:0007669"/>
    <property type="project" value="UniProtKB-UniRule"/>
</dbReference>
<dbReference type="CDD" id="cd01886">
    <property type="entry name" value="EF-G"/>
    <property type="match status" value="1"/>
</dbReference>
<dbReference type="CDD" id="cd16262">
    <property type="entry name" value="EFG_III"/>
    <property type="match status" value="1"/>
</dbReference>
<dbReference type="CDD" id="cd03713">
    <property type="entry name" value="EFG_mtEFG_C"/>
    <property type="match status" value="1"/>
</dbReference>
<dbReference type="FunFam" id="3.40.50.300:FF:001636">
    <property type="entry name" value="Ribosome-releasing factor 2, mitochondrial"/>
    <property type="match status" value="1"/>
</dbReference>
<dbReference type="FunFam" id="3.30.70.870:FF:000002">
    <property type="entry name" value="Translation elongation factor 2"/>
    <property type="match status" value="1"/>
</dbReference>
<dbReference type="Gene3D" id="3.30.70.240">
    <property type="match status" value="1"/>
</dbReference>
<dbReference type="Gene3D" id="3.30.70.870">
    <property type="entry name" value="Elongation Factor G (Translational Gtpase), domain 3"/>
    <property type="match status" value="1"/>
</dbReference>
<dbReference type="Gene3D" id="3.40.50.300">
    <property type="entry name" value="P-loop containing nucleotide triphosphate hydrolases"/>
    <property type="match status" value="1"/>
</dbReference>
<dbReference type="Gene3D" id="2.40.30.10">
    <property type="entry name" value="Translation factors"/>
    <property type="match status" value="1"/>
</dbReference>
<dbReference type="HAMAP" id="MF_03059">
    <property type="entry name" value="mEF_G_2"/>
    <property type="match status" value="1"/>
</dbReference>
<dbReference type="InterPro" id="IPR053905">
    <property type="entry name" value="EF-G-like_DII"/>
</dbReference>
<dbReference type="InterPro" id="IPR030851">
    <property type="entry name" value="EFG2"/>
</dbReference>
<dbReference type="InterPro" id="IPR041095">
    <property type="entry name" value="EFG_II"/>
</dbReference>
<dbReference type="InterPro" id="IPR009022">
    <property type="entry name" value="EFG_III"/>
</dbReference>
<dbReference type="InterPro" id="IPR035647">
    <property type="entry name" value="EFG_III/V"/>
</dbReference>
<dbReference type="InterPro" id="IPR035649">
    <property type="entry name" value="EFG_V"/>
</dbReference>
<dbReference type="InterPro" id="IPR000640">
    <property type="entry name" value="EFG_V-like"/>
</dbReference>
<dbReference type="InterPro" id="IPR031157">
    <property type="entry name" value="G_TR_CS"/>
</dbReference>
<dbReference type="InterPro" id="IPR027417">
    <property type="entry name" value="P-loop_NTPase"/>
</dbReference>
<dbReference type="InterPro" id="IPR005225">
    <property type="entry name" value="Small_GTP-bd"/>
</dbReference>
<dbReference type="InterPro" id="IPR000795">
    <property type="entry name" value="T_Tr_GTP-bd_dom"/>
</dbReference>
<dbReference type="InterPro" id="IPR009000">
    <property type="entry name" value="Transl_B-barrel_sf"/>
</dbReference>
<dbReference type="NCBIfam" id="TIGR00231">
    <property type="entry name" value="small_GTP"/>
    <property type="match status" value="1"/>
</dbReference>
<dbReference type="PANTHER" id="PTHR43261:SF1">
    <property type="entry name" value="RIBOSOME-RELEASING FACTOR 2, MITOCHONDRIAL"/>
    <property type="match status" value="1"/>
</dbReference>
<dbReference type="PANTHER" id="PTHR43261">
    <property type="entry name" value="TRANSLATION ELONGATION FACTOR G-RELATED"/>
    <property type="match status" value="1"/>
</dbReference>
<dbReference type="Pfam" id="PF22042">
    <property type="entry name" value="EF-G_D2"/>
    <property type="match status" value="1"/>
</dbReference>
<dbReference type="Pfam" id="PF00679">
    <property type="entry name" value="EFG_C"/>
    <property type="match status" value="1"/>
</dbReference>
<dbReference type="Pfam" id="PF14492">
    <property type="entry name" value="EFG_III"/>
    <property type="match status" value="1"/>
</dbReference>
<dbReference type="Pfam" id="PF00009">
    <property type="entry name" value="GTP_EFTU"/>
    <property type="match status" value="1"/>
</dbReference>
<dbReference type="PRINTS" id="PR00315">
    <property type="entry name" value="ELONGATNFCT"/>
</dbReference>
<dbReference type="SMART" id="SM00838">
    <property type="entry name" value="EFG_C"/>
    <property type="match status" value="1"/>
</dbReference>
<dbReference type="SUPFAM" id="SSF54980">
    <property type="entry name" value="EF-G C-terminal domain-like"/>
    <property type="match status" value="2"/>
</dbReference>
<dbReference type="SUPFAM" id="SSF52540">
    <property type="entry name" value="P-loop containing nucleoside triphosphate hydrolases"/>
    <property type="match status" value="1"/>
</dbReference>
<dbReference type="SUPFAM" id="SSF50447">
    <property type="entry name" value="Translation proteins"/>
    <property type="match status" value="1"/>
</dbReference>
<dbReference type="PROSITE" id="PS00301">
    <property type="entry name" value="G_TR_1"/>
    <property type="match status" value="1"/>
</dbReference>
<dbReference type="PROSITE" id="PS51722">
    <property type="entry name" value="G_TR_2"/>
    <property type="match status" value="1"/>
</dbReference>
<evidence type="ECO:0000255" key="1">
    <source>
        <dbReference type="HAMAP-Rule" id="MF_03059"/>
    </source>
</evidence>
<organism>
    <name type="scientific">Scheffersomyces stipitis (strain ATCC 58785 / CBS 6054 / NBRC 10063 / NRRL Y-11545)</name>
    <name type="common">Yeast</name>
    <name type="synonym">Pichia stipitis</name>
    <dbReference type="NCBI Taxonomy" id="322104"/>
    <lineage>
        <taxon>Eukaryota</taxon>
        <taxon>Fungi</taxon>
        <taxon>Dikarya</taxon>
        <taxon>Ascomycota</taxon>
        <taxon>Saccharomycotina</taxon>
        <taxon>Pichiomycetes</taxon>
        <taxon>Debaryomycetaceae</taxon>
        <taxon>Scheffersomyces</taxon>
    </lineage>
</organism>